<evidence type="ECO:0000269" key="1">
    <source>
    </source>
</evidence>
<evidence type="ECO:0000269" key="2">
    <source>
    </source>
</evidence>
<evidence type="ECO:0000312" key="3">
    <source>
        <dbReference type="EMBL" id="AAC96893.2"/>
    </source>
</evidence>
<evidence type="ECO:0000312" key="4">
    <source>
        <dbReference type="Proteomes" id="UP000000862"/>
    </source>
</evidence>
<evidence type="ECO:0007744" key="5">
    <source>
        <dbReference type="PDB" id="6NCL"/>
    </source>
</evidence>
<evidence type="ECO:0007744" key="6">
    <source>
        <dbReference type="PDB" id="8H2I"/>
    </source>
</evidence>
<protein>
    <recommendedName>
        <fullName>Minor capsid protein P5</fullName>
    </recommendedName>
</protein>
<organism evidence="3 4">
    <name type="scientific">Paramecium bursaria Chlorella virus 1</name>
    <name type="common">PBCV-1</name>
    <dbReference type="NCBI Taxonomy" id="10506"/>
    <lineage>
        <taxon>Viruses</taxon>
        <taxon>Varidnaviria</taxon>
        <taxon>Bamfordvirae</taxon>
        <taxon>Nucleocytoviricota</taxon>
        <taxon>Megaviricetes</taxon>
        <taxon>Algavirales</taxon>
        <taxon>Phycodnaviridae</taxon>
        <taxon>Chlorovirus</taxon>
    </lineage>
</organism>
<gene>
    <name evidence="3" type="primary">A526R</name>
</gene>
<feature type="chain" id="PRO_0000460571" description="Minor capsid protein P5">
    <location>
        <begin position="1"/>
        <end position="146"/>
    </location>
</feature>
<keyword id="KW-0002">3D-structure</keyword>
<keyword id="KW-0167">Capsid protein</keyword>
<keyword id="KW-0426">Late protein</keyword>
<keyword id="KW-1185">Reference proteome</keyword>
<keyword id="KW-0946">Virion</keyword>
<organismHost>
    <name type="scientific">Chlorella</name>
    <dbReference type="NCBI Taxonomy" id="3071"/>
</organismHost>
<dbReference type="EMBL" id="JF411744">
    <property type="protein sequence ID" value="AAC96893.2"/>
    <property type="molecule type" value="Genomic_DNA"/>
</dbReference>
<dbReference type="RefSeq" id="NP_048882.2">
    <property type="nucleotide sequence ID" value="NC_000852.5"/>
</dbReference>
<dbReference type="PDB" id="6NCL">
    <property type="method" value="EM"/>
    <property type="resolution" value="3.50 A"/>
    <property type="chains" value="a8=1-146"/>
</dbReference>
<dbReference type="PDB" id="8H2I">
    <property type="method" value="EM"/>
    <property type="resolution" value="3.80 A"/>
    <property type="chains" value="bP=1-146"/>
</dbReference>
<dbReference type="PDBsum" id="6NCL"/>
<dbReference type="PDBsum" id="8H2I"/>
<dbReference type="EMDB" id="EMD-0436"/>
<dbReference type="EMDB" id="EMD-34438"/>
<dbReference type="SMR" id="Q98576"/>
<dbReference type="GeneID" id="918428"/>
<dbReference type="KEGG" id="vg:918428"/>
<dbReference type="OrthoDB" id="17652at10239"/>
<dbReference type="Proteomes" id="UP000000862">
    <property type="component" value="Genome"/>
</dbReference>
<dbReference type="GO" id="GO:0019028">
    <property type="term" value="C:viral capsid"/>
    <property type="evidence" value="ECO:0007669"/>
    <property type="project" value="UniProtKB-KW"/>
</dbReference>
<proteinExistence type="evidence at protein level"/>
<accession>Q98576</accession>
<comment type="function">
    <text evidence="2">One of the minor capsid proteins that constitute a network internal to the major capsid proteins and outside the lipid membrane (PubMed:30674888). The minor capsid proteins glue and stabilize the capsomers (PubMed:30674888).</text>
</comment>
<comment type="subunit">
    <text evidence="2">Interacts with the major capsid protein.</text>
</comment>
<comment type="subcellular location">
    <subcellularLocation>
        <location evidence="2">Virion</location>
    </subcellularLocation>
</comment>
<comment type="induction">
    <text evidence="1">Expressed in the late phase of the viral replicative cycle.</text>
</comment>
<name>P5_PBCV1</name>
<reference key="1">
    <citation type="journal article" date="1996" name="Virology">
        <title>Analysis of 76 kb of the chlorella virus PBCV-1 330-kb genome: map positions 182 to 258.</title>
        <authorList>
            <person name="Kutish G.F."/>
            <person name="Li Y."/>
            <person name="Lu Z."/>
            <person name="Furuta M."/>
            <person name="Rock D.L."/>
            <person name="van Etten J.L."/>
        </authorList>
    </citation>
    <scope>NUCLEOTIDE SEQUENCE [LARGE SCALE GENOMIC DNA]</scope>
</reference>
<reference key="2">
    <citation type="journal article" date="2010" name="J. Virol.">
        <title>Microarray analysis of Paramecium bursaria chlorella virus 1 transcription.</title>
        <authorList>
            <person name="Yanai-Balser G.M."/>
            <person name="Duncan G.A."/>
            <person name="Eudy J.D."/>
            <person name="Wang D."/>
            <person name="Li X."/>
            <person name="Agarkova I.V."/>
            <person name="Dunigan D.D."/>
            <person name="Van Etten J.L."/>
        </authorList>
    </citation>
    <scope>INDUCTION</scope>
</reference>
<reference evidence="5" key="3">
    <citation type="journal article" date="2019" name="Nat. Commun.">
        <title>Near-atomic structure of a giant virus.</title>
        <authorList>
            <person name="Fang Q."/>
            <person name="Zhu D."/>
            <person name="Agarkova I."/>
            <person name="Adhikari J."/>
            <person name="Klose T."/>
            <person name="Liu Y."/>
            <person name="Chen Z."/>
            <person name="Sun Y."/>
            <person name="Gross M.L."/>
            <person name="Van Etten J.L."/>
            <person name="Zhang X."/>
            <person name="Rossmann M.G."/>
        </authorList>
    </citation>
    <scope>STRUCTURE BY ELECTRON MICROSCOPY (3.50 ANGSTROMS)</scope>
    <scope>FUNCTION</scope>
    <scope>SUBCELLULAR LOCATION</scope>
    <scope>INTERACTION WITH THE MAJOR CAPSID PROTEIN</scope>
</reference>
<reference evidence="6" key="4">
    <citation type="journal article" date="2022" name="Nat. Commun.">
        <title>Near-atomic, non-icosahedrally averaged structure of giant virus Paramecium bursaria chlorella virus 1.</title>
        <authorList>
            <person name="Shao Q."/>
            <person name="Agarkova I.V."/>
            <person name="Noel E.A."/>
            <person name="Dunigan D.D."/>
            <person name="Liu Y."/>
            <person name="Wang A."/>
            <person name="Guo M."/>
            <person name="Xie L."/>
            <person name="Zhao X."/>
            <person name="Rossmann M.G."/>
            <person name="Van Etten J.L."/>
            <person name="Klose T."/>
            <person name="Fang Q."/>
        </authorList>
    </citation>
    <scope>STRUCTURE BY ELECTRON MICROSCOPY (3.80 ANGSTROMS)</scope>
</reference>
<sequence length="146" mass="16434">MDSRLSAAYAIRAARISMIPGGVDGLVINYAEGGEPAWVQYPLKKQKPLPNNLCYTPTLEDIARKREAVIAKYTKQPLETGTTFTHVLNASHLNEQYTRVKKSALPDKEFPIIETEKYPEPPILWETTIGAPSRLFDRSDGVKYVR</sequence>